<gene>
    <name type="primary">PIG1</name>
    <name type="ordered locus">YLR273C</name>
    <name type="ORF">L9328.2</name>
</gene>
<reference key="1">
    <citation type="journal article" date="1997" name="Nature">
        <title>The nucleotide sequence of Saccharomyces cerevisiae chromosome XII.</title>
        <authorList>
            <person name="Johnston M."/>
            <person name="Hillier L.W."/>
            <person name="Riles L."/>
            <person name="Albermann K."/>
            <person name="Andre B."/>
            <person name="Ansorge W."/>
            <person name="Benes V."/>
            <person name="Brueckner M."/>
            <person name="Delius H."/>
            <person name="Dubois E."/>
            <person name="Duesterhoeft A."/>
            <person name="Entian K.-D."/>
            <person name="Floeth M."/>
            <person name="Goffeau A."/>
            <person name="Hebling U."/>
            <person name="Heumann K."/>
            <person name="Heuss-Neitzel D."/>
            <person name="Hilbert H."/>
            <person name="Hilger F."/>
            <person name="Kleine K."/>
            <person name="Koetter P."/>
            <person name="Louis E.J."/>
            <person name="Messenguy F."/>
            <person name="Mewes H.-W."/>
            <person name="Miosga T."/>
            <person name="Moestl D."/>
            <person name="Mueller-Auer S."/>
            <person name="Nentwich U."/>
            <person name="Obermaier B."/>
            <person name="Piravandi E."/>
            <person name="Pohl T.M."/>
            <person name="Portetelle D."/>
            <person name="Purnelle B."/>
            <person name="Rechmann S."/>
            <person name="Rieger M."/>
            <person name="Rinke M."/>
            <person name="Rose M."/>
            <person name="Scharfe M."/>
            <person name="Scherens B."/>
            <person name="Scholler P."/>
            <person name="Schwager C."/>
            <person name="Schwarz S."/>
            <person name="Underwood A.P."/>
            <person name="Urrestarazu L.A."/>
            <person name="Vandenbol M."/>
            <person name="Verhasselt P."/>
            <person name="Vierendeels F."/>
            <person name="Voet M."/>
            <person name="Volckaert G."/>
            <person name="Voss H."/>
            <person name="Wambutt R."/>
            <person name="Wedler E."/>
            <person name="Wedler H."/>
            <person name="Zimmermann F.K."/>
            <person name="Zollner A."/>
            <person name="Hani J."/>
            <person name="Hoheisel J.D."/>
        </authorList>
    </citation>
    <scope>NUCLEOTIDE SEQUENCE [LARGE SCALE GENOMIC DNA]</scope>
    <source>
        <strain>ATCC 204508 / S288c</strain>
    </source>
</reference>
<reference key="2">
    <citation type="journal article" date="2014" name="G3 (Bethesda)">
        <title>The reference genome sequence of Saccharomyces cerevisiae: Then and now.</title>
        <authorList>
            <person name="Engel S.R."/>
            <person name="Dietrich F.S."/>
            <person name="Fisk D.G."/>
            <person name="Binkley G."/>
            <person name="Balakrishnan R."/>
            <person name="Costanzo M.C."/>
            <person name="Dwight S.S."/>
            <person name="Hitz B.C."/>
            <person name="Karra K."/>
            <person name="Nash R.S."/>
            <person name="Weng S."/>
            <person name="Wong E.D."/>
            <person name="Lloyd P."/>
            <person name="Skrzypek M.S."/>
            <person name="Miyasato S.R."/>
            <person name="Simison M."/>
            <person name="Cherry J.M."/>
        </authorList>
    </citation>
    <scope>GENOME REANNOTATION</scope>
    <source>
        <strain>ATCC 204508 / S288c</strain>
    </source>
</reference>
<reference key="3">
    <citation type="journal article" date="2007" name="Genome Res.">
        <title>Approaching a complete repository of sequence-verified protein-encoding clones for Saccharomyces cerevisiae.</title>
        <authorList>
            <person name="Hu Y."/>
            <person name="Rolfs A."/>
            <person name="Bhullar B."/>
            <person name="Murthy T.V.S."/>
            <person name="Zhu C."/>
            <person name="Berger M.F."/>
            <person name="Camargo A.A."/>
            <person name="Kelley F."/>
            <person name="McCarron S."/>
            <person name="Jepson D."/>
            <person name="Richardson A."/>
            <person name="Raphael J."/>
            <person name="Moreira D."/>
            <person name="Taycher E."/>
            <person name="Zuo D."/>
            <person name="Mohr S."/>
            <person name="Kane M.F."/>
            <person name="Williamson J."/>
            <person name="Simpson A.J.G."/>
            <person name="Bulyk M.L."/>
            <person name="Harlow E."/>
            <person name="Marsischky G."/>
            <person name="Kolodner R.D."/>
            <person name="LaBaer J."/>
        </authorList>
    </citation>
    <scope>NUCLEOTIDE SEQUENCE [GENOMIC DNA]</scope>
    <source>
        <strain>ATCC 204508 / S288c</strain>
    </source>
</reference>
<reference key="4">
    <citation type="journal article" date="1997" name="Yeast">
        <title>Yeast PIG genes: PIG1 encodes a putative type 1 phosphatase subunit that interacts with the yeast glycogen synthase Gsy2p.</title>
        <authorList>
            <person name="Cheng C."/>
            <person name="Huang D."/>
            <person name="Roach P.J."/>
        </authorList>
    </citation>
    <scope>PARTIAL NUCLEOTIDE SEQUENCE</scope>
    <scope>CHARACTERIZATION</scope>
</reference>
<comment type="function">
    <text>Regulates the activity of glycogen synthase. It is most probably a regulatory subunit for protein phosphatase type 1.</text>
</comment>
<name>PIG1_YEAST</name>
<feature type="chain" id="PRO_0000071519" description="Serine/threonine-protein phosphatase 1 regulatory subunit PIG1">
    <location>
        <begin position="1"/>
        <end position="648"/>
    </location>
</feature>
<feature type="domain" description="CBM21" evidence="1">
    <location>
        <begin position="201"/>
        <end position="331"/>
    </location>
</feature>
<feature type="region of interest" description="Disordered" evidence="2">
    <location>
        <begin position="20"/>
        <end position="52"/>
    </location>
</feature>
<feature type="region of interest" description="Disordered" evidence="2">
    <location>
        <begin position="593"/>
        <end position="629"/>
    </location>
</feature>
<feature type="compositionally biased region" description="Low complexity" evidence="2">
    <location>
        <begin position="20"/>
        <end position="51"/>
    </location>
</feature>
<feature type="compositionally biased region" description="Polar residues" evidence="2">
    <location>
        <begin position="593"/>
        <end position="609"/>
    </location>
</feature>
<feature type="sequence conflict" description="In Ref. 3; AAU09763." evidence="3" ref="3">
    <original>I</original>
    <variation>K</variation>
    <location>
        <position position="228"/>
    </location>
</feature>
<dbReference type="EMBL" id="U17245">
    <property type="protein sequence ID" value="AAB67365.1"/>
    <property type="molecule type" value="Genomic_DNA"/>
</dbReference>
<dbReference type="EMBL" id="AY723846">
    <property type="protein sequence ID" value="AAU09763.1"/>
    <property type="molecule type" value="Genomic_DNA"/>
</dbReference>
<dbReference type="EMBL" id="BK006945">
    <property type="protein sequence ID" value="DAA09586.1"/>
    <property type="molecule type" value="Genomic_DNA"/>
</dbReference>
<dbReference type="PIR" id="S51409">
    <property type="entry name" value="S51409"/>
</dbReference>
<dbReference type="RefSeq" id="NP_013375.1">
    <property type="nucleotide sequence ID" value="NM_001182160.1"/>
</dbReference>
<dbReference type="SMR" id="Q06216"/>
<dbReference type="BioGRID" id="31541">
    <property type="interactions" value="51"/>
</dbReference>
<dbReference type="DIP" id="DIP-2918N"/>
<dbReference type="FunCoup" id="Q06216">
    <property type="interactions" value="46"/>
</dbReference>
<dbReference type="IntAct" id="Q06216">
    <property type="interactions" value="9"/>
</dbReference>
<dbReference type="MINT" id="Q06216"/>
<dbReference type="STRING" id="4932.YLR273C"/>
<dbReference type="CAZy" id="CBM21">
    <property type="family name" value="Carbohydrate-Binding Module Family 21"/>
</dbReference>
<dbReference type="iPTMnet" id="Q06216"/>
<dbReference type="PaxDb" id="4932-YLR273C"/>
<dbReference type="PeptideAtlas" id="Q06216"/>
<dbReference type="EnsemblFungi" id="YLR273C_mRNA">
    <property type="protein sequence ID" value="YLR273C"/>
    <property type="gene ID" value="YLR273C"/>
</dbReference>
<dbReference type="GeneID" id="850979"/>
<dbReference type="KEGG" id="sce:YLR273C"/>
<dbReference type="AGR" id="SGD:S000004263"/>
<dbReference type="SGD" id="S000004263">
    <property type="gene designation" value="PIG1"/>
</dbReference>
<dbReference type="VEuPathDB" id="FungiDB:YLR273C"/>
<dbReference type="eggNOG" id="KOG3986">
    <property type="taxonomic scope" value="Eukaryota"/>
</dbReference>
<dbReference type="GeneTree" id="ENSGT00940000176558"/>
<dbReference type="HOGENOM" id="CLU_028211_0_0_1"/>
<dbReference type="InParanoid" id="Q06216"/>
<dbReference type="OMA" id="IDCEIEP"/>
<dbReference type="OrthoDB" id="1881at2759"/>
<dbReference type="BioCyc" id="YEAST:G3O-32372-MONOMER"/>
<dbReference type="Reactome" id="R-SCE-3322077">
    <property type="pathway name" value="Glycogen synthesis"/>
</dbReference>
<dbReference type="BioGRID-ORCS" id="850979">
    <property type="hits" value="2 hits in 10 CRISPR screens"/>
</dbReference>
<dbReference type="PRO" id="PR:Q06216"/>
<dbReference type="Proteomes" id="UP000002311">
    <property type="component" value="Chromosome XII"/>
</dbReference>
<dbReference type="RNAct" id="Q06216">
    <property type="molecule type" value="protein"/>
</dbReference>
<dbReference type="GO" id="GO:0000164">
    <property type="term" value="C:protein phosphatase type 1 complex"/>
    <property type="evidence" value="ECO:0000247"/>
    <property type="project" value="SGD"/>
</dbReference>
<dbReference type="GO" id="GO:2001069">
    <property type="term" value="F:glycogen binding"/>
    <property type="evidence" value="ECO:0000318"/>
    <property type="project" value="GO_Central"/>
</dbReference>
<dbReference type="GO" id="GO:0008157">
    <property type="term" value="F:protein phosphatase 1 binding"/>
    <property type="evidence" value="ECO:0000318"/>
    <property type="project" value="GO_Central"/>
</dbReference>
<dbReference type="GO" id="GO:0019888">
    <property type="term" value="F:protein phosphatase regulator activity"/>
    <property type="evidence" value="ECO:0000315"/>
    <property type="project" value="SGD"/>
</dbReference>
<dbReference type="GO" id="GO:0005978">
    <property type="term" value="P:glycogen biosynthetic process"/>
    <property type="evidence" value="ECO:0007669"/>
    <property type="project" value="UniProtKB-KW"/>
</dbReference>
<dbReference type="GO" id="GO:0005979">
    <property type="term" value="P:regulation of glycogen biosynthetic process"/>
    <property type="evidence" value="ECO:0000316"/>
    <property type="project" value="SGD"/>
</dbReference>
<dbReference type="Gene3D" id="2.60.40.2440">
    <property type="entry name" value="Carbohydrate binding type-21 domain"/>
    <property type="match status" value="1"/>
</dbReference>
<dbReference type="InterPro" id="IPR005036">
    <property type="entry name" value="CBM21_dom"/>
</dbReference>
<dbReference type="InterPro" id="IPR038175">
    <property type="entry name" value="CBM21_dom_sf"/>
</dbReference>
<dbReference type="InterPro" id="IPR050782">
    <property type="entry name" value="PP1_regulatory_subunit_3"/>
</dbReference>
<dbReference type="PANTHER" id="PTHR12307">
    <property type="entry name" value="PROTEIN PHOSPHATASE 1 REGULATORY SUBUNIT"/>
    <property type="match status" value="1"/>
</dbReference>
<dbReference type="PANTHER" id="PTHR12307:SF51">
    <property type="entry name" value="SERINE_THREONINE-PROTEIN PHOSPHATASE 1 REGULATORY SUBUNIT GAC1-RELATED"/>
    <property type="match status" value="1"/>
</dbReference>
<dbReference type="Pfam" id="PF03370">
    <property type="entry name" value="CBM_21"/>
    <property type="match status" value="1"/>
</dbReference>
<dbReference type="PROSITE" id="PS51159">
    <property type="entry name" value="CBM21"/>
    <property type="match status" value="1"/>
</dbReference>
<accession>Q06216</accession>
<accession>D6VYS0</accession>
<accession>E9P964</accession>
<keyword id="KW-0320">Glycogen biosynthesis</keyword>
<keyword id="KW-1185">Reference proteome</keyword>
<proteinExistence type="evidence at protein level"/>
<protein>
    <recommendedName>
        <fullName>Serine/threonine-protein phosphatase 1 regulatory subunit PIG1</fullName>
    </recommendedName>
</protein>
<sequence>MPYSHGKKLKPSLKLAKTISTSSFVSSTTSNSFSPLEDSTSASSSTSSSSSGKSVRFAAHLYTVKKFNTKLAPISISEKAASNLTRNLHNNAIPLTFPFIGGEDHRYSLDILDYSDLEYDNKDVEYDNESDVEDNAMLMHDRSMFIEKEILCFGEEETFDMADWKLVSNNLNPFKSDYKVDVTGLEDKIFKYLNGQNIKVHSLELSDPVSYEDICSNNFGNCQIWGLIFVNNLNFEKKIEIKFTLNNWADIHYINAHYNKSVTPHVDEFKFIIDISALKLNLISKNLIYTNFFERKTTCLLNLQFCCRYDVNGFEYRSFYDNNDYKNYEITISLSAINLNRAVSNSSIFNSNLGPSKMGASNAEVTMSKNNENSKKPLRKFIKDTDYYNDSPLKHKFYQSFETKAACKTEPVSQTFKAETIDCEIEPFNYFFEPPDSQTNEDMSDSSYDLSLQDFNYWEFSNHGLGKALADSDILQFKNYPKPEPFSRPPIIDDTFTLNTDDRTLGSKTQKLEDNLAKEWKSAKTRTTLNETPLHDDEHRTSFTYTTWNNSTDTLMKRKEERPVESASCSQLSIATIKAEEDLLYQDYINSGRESSSPEISPLNTTTSLPFFPGDNMSDSSGEYEERTSLSPNKIHIFRDYFYKSPSP</sequence>
<organism>
    <name type="scientific">Saccharomyces cerevisiae (strain ATCC 204508 / S288c)</name>
    <name type="common">Baker's yeast</name>
    <dbReference type="NCBI Taxonomy" id="559292"/>
    <lineage>
        <taxon>Eukaryota</taxon>
        <taxon>Fungi</taxon>
        <taxon>Dikarya</taxon>
        <taxon>Ascomycota</taxon>
        <taxon>Saccharomycotina</taxon>
        <taxon>Saccharomycetes</taxon>
        <taxon>Saccharomycetales</taxon>
        <taxon>Saccharomycetaceae</taxon>
        <taxon>Saccharomyces</taxon>
    </lineage>
</organism>
<evidence type="ECO:0000255" key="1">
    <source>
        <dbReference type="PROSITE-ProRule" id="PRU00491"/>
    </source>
</evidence>
<evidence type="ECO:0000256" key="2">
    <source>
        <dbReference type="SAM" id="MobiDB-lite"/>
    </source>
</evidence>
<evidence type="ECO:0000305" key="3"/>